<accession>Q1I5A9</accession>
<protein>
    <recommendedName>
        <fullName>Transcriptional regulator MraZ</fullName>
    </recommendedName>
</protein>
<sequence>MFRGANAVSLDAKGRLAMPSRYRDELDSRCNGQLIVTIDAVDPCLCVYPLDEWEQIEAKLRALPSLREENRRLQRLLIGNAVDLELDGSGRFLVPPRLREYAKLDKKAMLVGQLNKFQLWDEDAWNAVSAADLAAIQQPGAMPDDLRDLIL</sequence>
<proteinExistence type="inferred from homology"/>
<name>MRAZ_PSEE4</name>
<reference key="1">
    <citation type="journal article" date="2006" name="Nat. Biotechnol.">
        <title>Complete genome sequence of the entomopathogenic and metabolically versatile soil bacterium Pseudomonas entomophila.</title>
        <authorList>
            <person name="Vodovar N."/>
            <person name="Vallenet D."/>
            <person name="Cruveiller S."/>
            <person name="Rouy Z."/>
            <person name="Barbe V."/>
            <person name="Acosta C."/>
            <person name="Cattolico L."/>
            <person name="Jubin C."/>
            <person name="Lajus A."/>
            <person name="Segurens B."/>
            <person name="Vacherie B."/>
            <person name="Wincker P."/>
            <person name="Weissenbach J."/>
            <person name="Lemaitre B."/>
            <person name="Medigue C."/>
            <person name="Boccard F."/>
        </authorList>
    </citation>
    <scope>NUCLEOTIDE SEQUENCE [LARGE SCALE GENOMIC DNA]</scope>
    <source>
        <strain>L48</strain>
    </source>
</reference>
<comment type="subunit">
    <text evidence="1">Forms oligomers.</text>
</comment>
<comment type="subcellular location">
    <subcellularLocation>
        <location evidence="1">Cytoplasm</location>
        <location evidence="1">Nucleoid</location>
    </subcellularLocation>
</comment>
<comment type="similarity">
    <text evidence="1">Belongs to the MraZ family.</text>
</comment>
<feature type="chain" id="PRO_1000062913" description="Transcriptional regulator MraZ">
    <location>
        <begin position="1"/>
        <end position="151"/>
    </location>
</feature>
<feature type="domain" description="SpoVT-AbrB 1" evidence="2">
    <location>
        <begin position="5"/>
        <end position="52"/>
    </location>
</feature>
<feature type="domain" description="SpoVT-AbrB 2" evidence="2">
    <location>
        <begin position="81"/>
        <end position="124"/>
    </location>
</feature>
<gene>
    <name evidence="1" type="primary">mraZ</name>
    <name type="ordered locus">PSEEN4494</name>
</gene>
<keyword id="KW-0963">Cytoplasm</keyword>
<keyword id="KW-0238">DNA-binding</keyword>
<keyword id="KW-0677">Repeat</keyword>
<keyword id="KW-0804">Transcription</keyword>
<keyword id="KW-0805">Transcription regulation</keyword>
<dbReference type="EMBL" id="CT573326">
    <property type="protein sequence ID" value="CAK17176.1"/>
    <property type="molecule type" value="Genomic_DNA"/>
</dbReference>
<dbReference type="RefSeq" id="WP_011535546.1">
    <property type="nucleotide sequence ID" value="NC_008027.1"/>
</dbReference>
<dbReference type="SMR" id="Q1I5A9"/>
<dbReference type="STRING" id="384676.PSEEN4494"/>
<dbReference type="GeneID" id="93675976"/>
<dbReference type="KEGG" id="pen:PSEEN4494"/>
<dbReference type="eggNOG" id="COG2001">
    <property type="taxonomic scope" value="Bacteria"/>
</dbReference>
<dbReference type="HOGENOM" id="CLU_107907_2_0_6"/>
<dbReference type="OrthoDB" id="9807753at2"/>
<dbReference type="Proteomes" id="UP000000658">
    <property type="component" value="Chromosome"/>
</dbReference>
<dbReference type="GO" id="GO:0005737">
    <property type="term" value="C:cytoplasm"/>
    <property type="evidence" value="ECO:0007669"/>
    <property type="project" value="UniProtKB-UniRule"/>
</dbReference>
<dbReference type="GO" id="GO:0009295">
    <property type="term" value="C:nucleoid"/>
    <property type="evidence" value="ECO:0007669"/>
    <property type="project" value="UniProtKB-SubCell"/>
</dbReference>
<dbReference type="GO" id="GO:0003700">
    <property type="term" value="F:DNA-binding transcription factor activity"/>
    <property type="evidence" value="ECO:0007669"/>
    <property type="project" value="UniProtKB-UniRule"/>
</dbReference>
<dbReference type="GO" id="GO:0000976">
    <property type="term" value="F:transcription cis-regulatory region binding"/>
    <property type="evidence" value="ECO:0007669"/>
    <property type="project" value="TreeGrafter"/>
</dbReference>
<dbReference type="GO" id="GO:2000143">
    <property type="term" value="P:negative regulation of DNA-templated transcription initiation"/>
    <property type="evidence" value="ECO:0007669"/>
    <property type="project" value="TreeGrafter"/>
</dbReference>
<dbReference type="CDD" id="cd16321">
    <property type="entry name" value="MraZ_C"/>
    <property type="match status" value="1"/>
</dbReference>
<dbReference type="CDD" id="cd16320">
    <property type="entry name" value="MraZ_N"/>
    <property type="match status" value="1"/>
</dbReference>
<dbReference type="Gene3D" id="3.40.1550.20">
    <property type="entry name" value="Transcriptional regulator MraZ domain"/>
    <property type="match status" value="1"/>
</dbReference>
<dbReference type="HAMAP" id="MF_01008">
    <property type="entry name" value="MraZ"/>
    <property type="match status" value="1"/>
</dbReference>
<dbReference type="InterPro" id="IPR003444">
    <property type="entry name" value="MraZ"/>
</dbReference>
<dbReference type="InterPro" id="IPR035644">
    <property type="entry name" value="MraZ_C"/>
</dbReference>
<dbReference type="InterPro" id="IPR020603">
    <property type="entry name" value="MraZ_dom"/>
</dbReference>
<dbReference type="InterPro" id="IPR035642">
    <property type="entry name" value="MraZ_N"/>
</dbReference>
<dbReference type="InterPro" id="IPR038619">
    <property type="entry name" value="MraZ_sf"/>
</dbReference>
<dbReference type="InterPro" id="IPR007159">
    <property type="entry name" value="SpoVT-AbrB_dom"/>
</dbReference>
<dbReference type="InterPro" id="IPR037914">
    <property type="entry name" value="SpoVT-AbrB_sf"/>
</dbReference>
<dbReference type="NCBIfam" id="TIGR00242">
    <property type="entry name" value="division/cell wall cluster transcriptional repressor MraZ"/>
    <property type="match status" value="1"/>
</dbReference>
<dbReference type="PANTHER" id="PTHR34701">
    <property type="entry name" value="TRANSCRIPTIONAL REGULATOR MRAZ"/>
    <property type="match status" value="1"/>
</dbReference>
<dbReference type="PANTHER" id="PTHR34701:SF1">
    <property type="entry name" value="TRANSCRIPTIONAL REGULATOR MRAZ"/>
    <property type="match status" value="1"/>
</dbReference>
<dbReference type="Pfam" id="PF02381">
    <property type="entry name" value="MraZ"/>
    <property type="match status" value="2"/>
</dbReference>
<dbReference type="SUPFAM" id="SSF89447">
    <property type="entry name" value="AbrB/MazE/MraZ-like"/>
    <property type="match status" value="1"/>
</dbReference>
<dbReference type="PROSITE" id="PS51740">
    <property type="entry name" value="SPOVT_ABRB"/>
    <property type="match status" value="2"/>
</dbReference>
<evidence type="ECO:0000255" key="1">
    <source>
        <dbReference type="HAMAP-Rule" id="MF_01008"/>
    </source>
</evidence>
<evidence type="ECO:0000255" key="2">
    <source>
        <dbReference type="PROSITE-ProRule" id="PRU01076"/>
    </source>
</evidence>
<organism>
    <name type="scientific">Pseudomonas entomophila (strain L48)</name>
    <dbReference type="NCBI Taxonomy" id="384676"/>
    <lineage>
        <taxon>Bacteria</taxon>
        <taxon>Pseudomonadati</taxon>
        <taxon>Pseudomonadota</taxon>
        <taxon>Gammaproteobacteria</taxon>
        <taxon>Pseudomonadales</taxon>
        <taxon>Pseudomonadaceae</taxon>
        <taxon>Pseudomonas</taxon>
    </lineage>
</organism>